<reference key="1">
    <citation type="journal article" date="2008" name="Genome Biol.">
        <title>The complete genome, comparative and functional analysis of Stenotrophomonas maltophilia reveals an organism heavily shielded by drug resistance determinants.</title>
        <authorList>
            <person name="Crossman L.C."/>
            <person name="Gould V.C."/>
            <person name="Dow J.M."/>
            <person name="Vernikos G.S."/>
            <person name="Okazaki A."/>
            <person name="Sebaihia M."/>
            <person name="Saunders D."/>
            <person name="Arrowsmith C."/>
            <person name="Carver T."/>
            <person name="Peters N."/>
            <person name="Adlem E."/>
            <person name="Kerhornou A."/>
            <person name="Lord A."/>
            <person name="Murphy L."/>
            <person name="Seeger K."/>
            <person name="Squares R."/>
            <person name="Rutter S."/>
            <person name="Quail M.A."/>
            <person name="Rajandream M.A."/>
            <person name="Harris D."/>
            <person name="Churcher C."/>
            <person name="Bentley S.D."/>
            <person name="Parkhill J."/>
            <person name="Thomson N.R."/>
            <person name="Avison M.B."/>
        </authorList>
    </citation>
    <scope>NUCLEOTIDE SEQUENCE [LARGE SCALE GENOMIC DNA]</scope>
    <source>
        <strain>K279a</strain>
    </source>
</reference>
<gene>
    <name evidence="1" type="primary">glyA</name>
    <name type="ordered locus">Smlt0718</name>
</gene>
<feature type="chain" id="PRO_1000091584" description="Serine hydroxymethyltransferase">
    <location>
        <begin position="1"/>
        <end position="417"/>
    </location>
</feature>
<feature type="binding site" evidence="1">
    <location>
        <position position="121"/>
    </location>
    <ligand>
        <name>(6S)-5,6,7,8-tetrahydrofolate</name>
        <dbReference type="ChEBI" id="CHEBI:57453"/>
    </ligand>
</feature>
<feature type="binding site" evidence="1">
    <location>
        <begin position="125"/>
        <end position="127"/>
    </location>
    <ligand>
        <name>(6S)-5,6,7,8-tetrahydrofolate</name>
        <dbReference type="ChEBI" id="CHEBI:57453"/>
    </ligand>
</feature>
<feature type="binding site" evidence="1">
    <location>
        <begin position="355"/>
        <end position="357"/>
    </location>
    <ligand>
        <name>(6S)-5,6,7,8-tetrahydrofolate</name>
        <dbReference type="ChEBI" id="CHEBI:57453"/>
    </ligand>
</feature>
<feature type="site" description="Plays an important role in substrate specificity" evidence="1">
    <location>
        <position position="228"/>
    </location>
</feature>
<feature type="modified residue" description="N6-(pyridoxal phosphate)lysine" evidence="1">
    <location>
        <position position="229"/>
    </location>
</feature>
<dbReference type="EC" id="2.1.2.1" evidence="1"/>
<dbReference type="EMBL" id="AM743169">
    <property type="protein sequence ID" value="CAQ44297.1"/>
    <property type="molecule type" value="Genomic_DNA"/>
</dbReference>
<dbReference type="RefSeq" id="WP_005408051.1">
    <property type="nucleotide sequence ID" value="NC_010943.1"/>
</dbReference>
<dbReference type="SMR" id="B2FNK2"/>
<dbReference type="EnsemblBacteria" id="CAQ44297">
    <property type="protein sequence ID" value="CAQ44297"/>
    <property type="gene ID" value="Smlt0718"/>
</dbReference>
<dbReference type="GeneID" id="93831757"/>
<dbReference type="KEGG" id="sml:Smlt0718"/>
<dbReference type="eggNOG" id="COG0112">
    <property type="taxonomic scope" value="Bacteria"/>
</dbReference>
<dbReference type="HOGENOM" id="CLU_022477_2_1_6"/>
<dbReference type="UniPathway" id="UPA00193"/>
<dbReference type="UniPathway" id="UPA00288">
    <property type="reaction ID" value="UER01023"/>
</dbReference>
<dbReference type="Proteomes" id="UP000008840">
    <property type="component" value="Chromosome"/>
</dbReference>
<dbReference type="GO" id="GO:0005829">
    <property type="term" value="C:cytosol"/>
    <property type="evidence" value="ECO:0007669"/>
    <property type="project" value="TreeGrafter"/>
</dbReference>
<dbReference type="GO" id="GO:0004372">
    <property type="term" value="F:glycine hydroxymethyltransferase activity"/>
    <property type="evidence" value="ECO:0007669"/>
    <property type="project" value="UniProtKB-UniRule"/>
</dbReference>
<dbReference type="GO" id="GO:0030170">
    <property type="term" value="F:pyridoxal phosphate binding"/>
    <property type="evidence" value="ECO:0007669"/>
    <property type="project" value="UniProtKB-UniRule"/>
</dbReference>
<dbReference type="GO" id="GO:0019264">
    <property type="term" value="P:glycine biosynthetic process from serine"/>
    <property type="evidence" value="ECO:0007669"/>
    <property type="project" value="UniProtKB-UniRule"/>
</dbReference>
<dbReference type="GO" id="GO:0035999">
    <property type="term" value="P:tetrahydrofolate interconversion"/>
    <property type="evidence" value="ECO:0007669"/>
    <property type="project" value="UniProtKB-UniRule"/>
</dbReference>
<dbReference type="CDD" id="cd00378">
    <property type="entry name" value="SHMT"/>
    <property type="match status" value="1"/>
</dbReference>
<dbReference type="FunFam" id="3.40.640.10:FF:000001">
    <property type="entry name" value="Serine hydroxymethyltransferase"/>
    <property type="match status" value="1"/>
</dbReference>
<dbReference type="FunFam" id="3.90.1150.10:FF:000003">
    <property type="entry name" value="Serine hydroxymethyltransferase"/>
    <property type="match status" value="1"/>
</dbReference>
<dbReference type="Gene3D" id="3.90.1150.10">
    <property type="entry name" value="Aspartate Aminotransferase, domain 1"/>
    <property type="match status" value="1"/>
</dbReference>
<dbReference type="Gene3D" id="3.40.640.10">
    <property type="entry name" value="Type I PLP-dependent aspartate aminotransferase-like (Major domain)"/>
    <property type="match status" value="1"/>
</dbReference>
<dbReference type="HAMAP" id="MF_00051">
    <property type="entry name" value="SHMT"/>
    <property type="match status" value="1"/>
</dbReference>
<dbReference type="InterPro" id="IPR015424">
    <property type="entry name" value="PyrdxlP-dep_Trfase"/>
</dbReference>
<dbReference type="InterPro" id="IPR015421">
    <property type="entry name" value="PyrdxlP-dep_Trfase_major"/>
</dbReference>
<dbReference type="InterPro" id="IPR015422">
    <property type="entry name" value="PyrdxlP-dep_Trfase_small"/>
</dbReference>
<dbReference type="InterPro" id="IPR001085">
    <property type="entry name" value="Ser_HO-MeTrfase"/>
</dbReference>
<dbReference type="InterPro" id="IPR049943">
    <property type="entry name" value="Ser_HO-MeTrfase-like"/>
</dbReference>
<dbReference type="InterPro" id="IPR019798">
    <property type="entry name" value="Ser_HO-MeTrfase_PLP_BS"/>
</dbReference>
<dbReference type="InterPro" id="IPR039429">
    <property type="entry name" value="SHMT-like_dom"/>
</dbReference>
<dbReference type="NCBIfam" id="NF000586">
    <property type="entry name" value="PRK00011.1"/>
    <property type="match status" value="1"/>
</dbReference>
<dbReference type="PANTHER" id="PTHR11680">
    <property type="entry name" value="SERINE HYDROXYMETHYLTRANSFERASE"/>
    <property type="match status" value="1"/>
</dbReference>
<dbReference type="PANTHER" id="PTHR11680:SF50">
    <property type="entry name" value="SERINE HYDROXYMETHYLTRANSFERASE"/>
    <property type="match status" value="1"/>
</dbReference>
<dbReference type="Pfam" id="PF00464">
    <property type="entry name" value="SHMT"/>
    <property type="match status" value="1"/>
</dbReference>
<dbReference type="PIRSF" id="PIRSF000412">
    <property type="entry name" value="SHMT"/>
    <property type="match status" value="1"/>
</dbReference>
<dbReference type="SUPFAM" id="SSF53383">
    <property type="entry name" value="PLP-dependent transferases"/>
    <property type="match status" value="1"/>
</dbReference>
<dbReference type="PROSITE" id="PS00096">
    <property type="entry name" value="SHMT"/>
    <property type="match status" value="1"/>
</dbReference>
<name>GLYA_STRMK</name>
<accession>B2FNK2</accession>
<keyword id="KW-0028">Amino-acid biosynthesis</keyword>
<keyword id="KW-0963">Cytoplasm</keyword>
<keyword id="KW-0554">One-carbon metabolism</keyword>
<keyword id="KW-0663">Pyridoxal phosphate</keyword>
<keyword id="KW-1185">Reference proteome</keyword>
<keyword id="KW-0808">Transferase</keyword>
<proteinExistence type="inferred from homology"/>
<evidence type="ECO:0000255" key="1">
    <source>
        <dbReference type="HAMAP-Rule" id="MF_00051"/>
    </source>
</evidence>
<protein>
    <recommendedName>
        <fullName evidence="1">Serine hydroxymethyltransferase</fullName>
        <shortName evidence="1">SHMT</shortName>
        <shortName evidence="1">Serine methylase</shortName>
        <ecNumber evidence="1">2.1.2.1</ecNumber>
    </recommendedName>
</protein>
<sequence>MFPRDVRIESYDPELAKAIAAETQRQEDHVELIASENYTSPAVMEAQGSQLTNKYAEGYPGKRYYGGCEYVDIAEQLAIDRLKQLFGADYANVQPHSGSQANQAVYFALLQPGDTILGMSLAHGGHLTHGAKVNASGKLFNAVQYGVNDQGLIDYDEVERLALEHKPKMVVAGFSAYSQVIDWARFRAIADKVGAYLFVDMAHVAGLVAAGVYPSPLEHAHVVTSTTHKTLRGPRGGIIVAKGADEDLVKKLQSIVFPGIQGGPLMHVIAGKAVAFKEALEPGFKAYQQQVVKNAQAMANTLIERGYKIVSGGTQNHLMLVDMIGKDVSGKDAEAALGKAHITVNKNSVPNDPRSPFVTSGLRLGTPAVTTRGYVEQDCVDLANWIADVLDAPNDDAVIARVRDAVSAQCRKYPVYG</sequence>
<comment type="function">
    <text evidence="1">Catalyzes the reversible interconversion of serine and glycine with tetrahydrofolate (THF) serving as the one-carbon carrier. This reaction serves as the major source of one-carbon groups required for the biosynthesis of purines, thymidylate, methionine, and other important biomolecules. Also exhibits THF-independent aldolase activity toward beta-hydroxyamino acids, producing glycine and aldehydes, via a retro-aldol mechanism.</text>
</comment>
<comment type="catalytic activity">
    <reaction evidence="1">
        <text>(6R)-5,10-methylene-5,6,7,8-tetrahydrofolate + glycine + H2O = (6S)-5,6,7,8-tetrahydrofolate + L-serine</text>
        <dbReference type="Rhea" id="RHEA:15481"/>
        <dbReference type="ChEBI" id="CHEBI:15377"/>
        <dbReference type="ChEBI" id="CHEBI:15636"/>
        <dbReference type="ChEBI" id="CHEBI:33384"/>
        <dbReference type="ChEBI" id="CHEBI:57305"/>
        <dbReference type="ChEBI" id="CHEBI:57453"/>
        <dbReference type="EC" id="2.1.2.1"/>
    </reaction>
</comment>
<comment type="cofactor">
    <cofactor evidence="1">
        <name>pyridoxal 5'-phosphate</name>
        <dbReference type="ChEBI" id="CHEBI:597326"/>
    </cofactor>
</comment>
<comment type="pathway">
    <text evidence="1">One-carbon metabolism; tetrahydrofolate interconversion.</text>
</comment>
<comment type="pathway">
    <text evidence="1">Amino-acid biosynthesis; glycine biosynthesis; glycine from L-serine: step 1/1.</text>
</comment>
<comment type="subunit">
    <text evidence="1">Homodimer.</text>
</comment>
<comment type="subcellular location">
    <subcellularLocation>
        <location evidence="1">Cytoplasm</location>
    </subcellularLocation>
</comment>
<comment type="similarity">
    <text evidence="1">Belongs to the SHMT family.</text>
</comment>
<organism>
    <name type="scientific">Stenotrophomonas maltophilia (strain K279a)</name>
    <dbReference type="NCBI Taxonomy" id="522373"/>
    <lineage>
        <taxon>Bacteria</taxon>
        <taxon>Pseudomonadati</taxon>
        <taxon>Pseudomonadota</taxon>
        <taxon>Gammaproteobacteria</taxon>
        <taxon>Lysobacterales</taxon>
        <taxon>Lysobacteraceae</taxon>
        <taxon>Stenotrophomonas</taxon>
        <taxon>Stenotrophomonas maltophilia group</taxon>
    </lineage>
</organism>